<proteinExistence type="evidence at protein level"/>
<accession>Q7A4B3</accession>
<dbReference type="EC" id="2.7.1.197" evidence="1 2"/>
<dbReference type="EMBL" id="BA000018">
    <property type="protein sequence ID" value="BAB43249.1"/>
    <property type="molecule type" value="Genomic_DNA"/>
</dbReference>
<dbReference type="PIR" id="H90010">
    <property type="entry name" value="H90010"/>
</dbReference>
<dbReference type="RefSeq" id="WP_000083807.1">
    <property type="nucleotide sequence ID" value="NC_002745.2"/>
</dbReference>
<dbReference type="SMR" id="Q7A4B3"/>
<dbReference type="EnsemblBacteria" id="BAB43249">
    <property type="protein sequence ID" value="BAB43249"/>
    <property type="gene ID" value="BAB43249"/>
</dbReference>
<dbReference type="KEGG" id="sau:SA1960"/>
<dbReference type="HOGENOM" id="CLU_028721_2_1_9"/>
<dbReference type="GO" id="GO:0005886">
    <property type="term" value="C:plasma membrane"/>
    <property type="evidence" value="ECO:0007669"/>
    <property type="project" value="UniProtKB-SubCell"/>
</dbReference>
<dbReference type="GO" id="GO:0016301">
    <property type="term" value="F:kinase activity"/>
    <property type="evidence" value="ECO:0007669"/>
    <property type="project" value="UniProtKB-KW"/>
</dbReference>
<dbReference type="GO" id="GO:0022872">
    <property type="term" value="F:protein-N(PI)-phosphohistidine-mannitol phosphotransferase system transmembrane transporter activity"/>
    <property type="evidence" value="ECO:0007669"/>
    <property type="project" value="InterPro"/>
</dbReference>
<dbReference type="GO" id="GO:0090563">
    <property type="term" value="F:protein-phosphocysteine-sugar phosphotransferase activity"/>
    <property type="evidence" value="ECO:0007669"/>
    <property type="project" value="TreeGrafter"/>
</dbReference>
<dbReference type="GO" id="GO:0009401">
    <property type="term" value="P:phosphoenolpyruvate-dependent sugar phosphotransferase system"/>
    <property type="evidence" value="ECO:0007669"/>
    <property type="project" value="UniProtKB-KW"/>
</dbReference>
<dbReference type="CDD" id="cd05567">
    <property type="entry name" value="PTS_IIB_mannitol"/>
    <property type="match status" value="1"/>
</dbReference>
<dbReference type="FunFam" id="3.40.50.2300:FF:000047">
    <property type="entry name" value="PTS system mannitol-specific transporter subunit IICBA"/>
    <property type="match status" value="1"/>
</dbReference>
<dbReference type="Gene3D" id="3.40.50.2300">
    <property type="match status" value="1"/>
</dbReference>
<dbReference type="InterPro" id="IPR036095">
    <property type="entry name" value="PTS_EIIB-like_sf"/>
</dbReference>
<dbReference type="InterPro" id="IPR013011">
    <property type="entry name" value="PTS_EIIB_2"/>
</dbReference>
<dbReference type="InterPro" id="IPR003501">
    <property type="entry name" value="PTS_EIIB_2/3"/>
</dbReference>
<dbReference type="InterPro" id="IPR029503">
    <property type="entry name" value="PTS_EIIB_mannitol"/>
</dbReference>
<dbReference type="InterPro" id="IPR003352">
    <property type="entry name" value="PTS_EIIC"/>
</dbReference>
<dbReference type="InterPro" id="IPR013014">
    <property type="entry name" value="PTS_EIIC_2"/>
</dbReference>
<dbReference type="InterPro" id="IPR004718">
    <property type="entry name" value="PTS_IIC_mtl"/>
</dbReference>
<dbReference type="InterPro" id="IPR050893">
    <property type="entry name" value="Sugar_PTS"/>
</dbReference>
<dbReference type="NCBIfam" id="TIGR00851">
    <property type="entry name" value="mtlA"/>
    <property type="match status" value="1"/>
</dbReference>
<dbReference type="PANTHER" id="PTHR30181">
    <property type="entry name" value="MANNITOL PERMEASE IIC COMPONENT"/>
    <property type="match status" value="1"/>
</dbReference>
<dbReference type="PANTHER" id="PTHR30181:SF2">
    <property type="entry name" value="PTS SYSTEM MANNITOL-SPECIFIC EIICBA COMPONENT"/>
    <property type="match status" value="1"/>
</dbReference>
<dbReference type="Pfam" id="PF02378">
    <property type="entry name" value="PTS_EIIC"/>
    <property type="match status" value="1"/>
</dbReference>
<dbReference type="Pfam" id="PF02302">
    <property type="entry name" value="PTS_IIB"/>
    <property type="match status" value="1"/>
</dbReference>
<dbReference type="SUPFAM" id="SSF52794">
    <property type="entry name" value="PTS system IIB component-like"/>
    <property type="match status" value="1"/>
</dbReference>
<dbReference type="PROSITE" id="PS51099">
    <property type="entry name" value="PTS_EIIB_TYPE_2"/>
    <property type="match status" value="1"/>
</dbReference>
<dbReference type="PROSITE" id="PS51104">
    <property type="entry name" value="PTS_EIIC_TYPE_2"/>
    <property type="match status" value="1"/>
</dbReference>
<evidence type="ECO:0000250" key="1">
    <source>
        <dbReference type="UniProtKB" id="P00550"/>
    </source>
</evidence>
<evidence type="ECO:0000250" key="2">
    <source>
        <dbReference type="UniProtKB" id="P28008"/>
    </source>
</evidence>
<evidence type="ECO:0000255" key="3">
    <source>
        <dbReference type="PROSITE-ProRule" id="PRU00422"/>
    </source>
</evidence>
<evidence type="ECO:0000255" key="4">
    <source>
        <dbReference type="PROSITE-ProRule" id="PRU00427"/>
    </source>
</evidence>
<evidence type="ECO:0000256" key="5">
    <source>
        <dbReference type="SAM" id="MobiDB-lite"/>
    </source>
</evidence>
<comment type="function">
    <text evidence="2">The phosphoenolpyruvate-dependent sugar phosphotransferase system (sugar PTS), a major carbohydrate active transport system, catalyzes the phosphorylation of incoming sugar substrates concomitantly with their translocation across the cell membrane. The enzyme II CmtAB PTS system is involved in D-mannitol transport.</text>
</comment>
<comment type="catalytic activity">
    <reaction evidence="1 2">
        <text>D-mannitol(out) + N(pros)-phospho-L-histidyl-[protein] = D-mannitol 1-phosphate(in) + L-histidyl-[protein]</text>
        <dbReference type="Rhea" id="RHEA:33363"/>
        <dbReference type="Rhea" id="RHEA-COMP:9745"/>
        <dbReference type="Rhea" id="RHEA-COMP:9746"/>
        <dbReference type="ChEBI" id="CHEBI:16899"/>
        <dbReference type="ChEBI" id="CHEBI:29979"/>
        <dbReference type="ChEBI" id="CHEBI:61381"/>
        <dbReference type="ChEBI" id="CHEBI:64837"/>
        <dbReference type="EC" id="2.7.1.197"/>
    </reaction>
</comment>
<comment type="subunit">
    <text evidence="2">Homodimer.</text>
</comment>
<comment type="subcellular location">
    <subcellularLocation>
        <location evidence="4">Cell membrane</location>
        <topology evidence="4">Multi-pass membrane protein</topology>
    </subcellularLocation>
</comment>
<comment type="domain">
    <text evidence="4">The EIIC type-2 domain forms the PTS system translocation channel and contains the specific substrate-binding site.</text>
</comment>
<comment type="domain">
    <text evidence="3">The PTS EIIB type-2 domain is phosphorylated by phospho-EIIA on a cysteinyl residue. Then, it transfers the phosphoryl group to the sugar substrate concomitantly with the sugar uptake processed by the PTS EIIC type-2 domain.</text>
</comment>
<organism>
    <name type="scientific">Staphylococcus aureus (strain N315)</name>
    <dbReference type="NCBI Taxonomy" id="158879"/>
    <lineage>
        <taxon>Bacteria</taxon>
        <taxon>Bacillati</taxon>
        <taxon>Bacillota</taxon>
        <taxon>Bacilli</taxon>
        <taxon>Bacillales</taxon>
        <taxon>Staphylococcaceae</taxon>
        <taxon>Staphylococcus</taxon>
    </lineage>
</organism>
<reference key="1">
    <citation type="journal article" date="2001" name="Lancet">
        <title>Whole genome sequencing of meticillin-resistant Staphylococcus aureus.</title>
        <authorList>
            <person name="Kuroda M."/>
            <person name="Ohta T."/>
            <person name="Uchiyama I."/>
            <person name="Baba T."/>
            <person name="Yuzawa H."/>
            <person name="Kobayashi I."/>
            <person name="Cui L."/>
            <person name="Oguchi A."/>
            <person name="Aoki K."/>
            <person name="Nagai Y."/>
            <person name="Lian J.-Q."/>
            <person name="Ito T."/>
            <person name="Kanamori M."/>
            <person name="Matsumaru H."/>
            <person name="Maruyama A."/>
            <person name="Murakami H."/>
            <person name="Hosoyama A."/>
            <person name="Mizutani-Ui Y."/>
            <person name="Takahashi N.K."/>
            <person name="Sawano T."/>
            <person name="Inoue R."/>
            <person name="Kaito C."/>
            <person name="Sekimizu K."/>
            <person name="Hirakawa H."/>
            <person name="Kuhara S."/>
            <person name="Goto S."/>
            <person name="Yabuzaki J."/>
            <person name="Kanehisa M."/>
            <person name="Yamashita A."/>
            <person name="Oshima K."/>
            <person name="Furuya K."/>
            <person name="Yoshino C."/>
            <person name="Shiba T."/>
            <person name="Hattori M."/>
            <person name="Ogasawara N."/>
            <person name="Hayashi H."/>
            <person name="Hiramatsu K."/>
        </authorList>
    </citation>
    <scope>NUCLEOTIDE SEQUENCE [LARGE SCALE GENOMIC DNA]</scope>
    <source>
        <strain>N315</strain>
    </source>
</reference>
<reference key="2">
    <citation type="submission" date="2007-10" db="UniProtKB">
        <title>Shotgun proteomic analysis of total and membrane protein extracts of S. aureus strain N315.</title>
        <authorList>
            <person name="Vaezzadeh A.R."/>
            <person name="Deshusses J."/>
            <person name="Lescuyer P."/>
            <person name="Hochstrasser D.F."/>
        </authorList>
    </citation>
    <scope>IDENTIFICATION BY MASS SPECTROMETRY [LARGE SCALE ANALYSIS]</scope>
    <source>
        <strain>N315</strain>
    </source>
</reference>
<feature type="chain" id="PRO_0000186622" description="PTS system mannitol-specific EIICB component">
    <location>
        <begin position="1"/>
        <end position="512"/>
    </location>
</feature>
<feature type="topological domain" description="Cytoplasmic" evidence="1">
    <location>
        <begin position="1"/>
        <end position="28"/>
    </location>
</feature>
<feature type="transmembrane region" description="Helical" evidence="1">
    <location>
        <begin position="29"/>
        <end position="50"/>
    </location>
</feature>
<feature type="topological domain" description="Extracellular" evidence="1">
    <location>
        <begin position="51"/>
        <end position="54"/>
    </location>
</feature>
<feature type="transmembrane region" description="Helical" evidence="1">
    <location>
        <begin position="55"/>
        <end position="75"/>
    </location>
</feature>
<feature type="topological domain" description="Cytoplasmic" evidence="1">
    <location>
        <begin position="76"/>
        <end position="139"/>
    </location>
</feature>
<feature type="transmembrane region" description="Helical" evidence="1">
    <location>
        <begin position="140"/>
        <end position="161"/>
    </location>
</feature>
<feature type="topological domain" description="Extracellular" evidence="1">
    <location>
        <begin position="162"/>
        <end position="170"/>
    </location>
</feature>
<feature type="transmembrane region" description="Helical" evidence="1">
    <location>
        <begin position="171"/>
        <end position="191"/>
    </location>
</feature>
<feature type="topological domain" description="Cytoplasmic" evidence="1">
    <location>
        <begin position="192"/>
        <end position="278"/>
    </location>
</feature>
<feature type="transmembrane region" description="Helical" evidence="1">
    <location>
        <begin position="279"/>
        <end position="298"/>
    </location>
</feature>
<feature type="topological domain" description="Extracellular" evidence="1">
    <location>
        <begin position="299"/>
        <end position="318"/>
    </location>
</feature>
<feature type="transmembrane region" description="Helical" evidence="1">
    <location>
        <begin position="319"/>
        <end position="340"/>
    </location>
</feature>
<feature type="topological domain" description="Cytoplasmic" evidence="1">
    <location>
        <begin position="341"/>
        <end position="512"/>
    </location>
</feature>
<feature type="domain" description="PTS EIIC type-2" evidence="4">
    <location>
        <begin position="17"/>
        <end position="349"/>
    </location>
</feature>
<feature type="domain" description="PTS EIIB type-2" evidence="3">
    <location>
        <begin position="419"/>
        <end position="512"/>
    </location>
</feature>
<feature type="region of interest" description="Disordered" evidence="5">
    <location>
        <begin position="355"/>
        <end position="402"/>
    </location>
</feature>
<feature type="compositionally biased region" description="Low complexity" evidence="5">
    <location>
        <begin position="365"/>
        <end position="376"/>
    </location>
</feature>
<feature type="compositionally biased region" description="Polar residues" evidence="5">
    <location>
        <begin position="380"/>
        <end position="392"/>
    </location>
</feature>
<feature type="active site" description="Phosphocysteine intermediate; for EIIB activity" evidence="1 2">
    <location>
        <position position="425"/>
    </location>
</feature>
<feature type="modified residue" description="Phosphocysteine; by EIIA" evidence="1 2 3">
    <location>
        <position position="425"/>
    </location>
</feature>
<keyword id="KW-1003">Cell membrane</keyword>
<keyword id="KW-0418">Kinase</keyword>
<keyword id="KW-0472">Membrane</keyword>
<keyword id="KW-0597">Phosphoprotein</keyword>
<keyword id="KW-0598">Phosphotransferase system</keyword>
<keyword id="KW-0762">Sugar transport</keyword>
<keyword id="KW-0808">Transferase</keyword>
<keyword id="KW-0812">Transmembrane</keyword>
<keyword id="KW-1133">Transmembrane helix</keyword>
<keyword id="KW-0813">Transport</keyword>
<gene>
    <name type="primary">mtlA</name>
    <name type="ordered locus">SA1960</name>
</gene>
<protein>
    <recommendedName>
        <fullName evidence="2">PTS system mannitol-specific EIICB component</fullName>
    </recommendedName>
    <alternativeName>
        <fullName evidence="2">EIICB-Mtl</fullName>
        <shortName evidence="2">EII-Mtl</shortName>
    </alternativeName>
    <domain>
        <recommendedName>
            <fullName evidence="2">Mannitol permease IIC component</fullName>
        </recommendedName>
        <alternativeName>
            <fullName evidence="2">PTS system mannitol-specific EIIC component</fullName>
        </alternativeName>
    </domain>
    <domain>
        <recommendedName>
            <fullName evidence="2">Mannitol-specific phosphotransferase enzyme IIB component</fullName>
            <ecNumber evidence="1 2">2.7.1.197</ecNumber>
        </recommendedName>
        <alternativeName>
            <fullName evidence="2">PTS system mannitol-specific EIIB component</fullName>
        </alternativeName>
    </domain>
</protein>
<sequence>MSQTEEKKGIGRRVQAFGSFLSSMIMPNIGAFIAWGFIAAIFIDNGWLPNKDLATLAGPMITYLIPLLIAFSGGRLIYDLRGGIIAATATMGVIVALPDTPMLLGAMIMGPLVGWLMKKTDQLIQPRTPQGFEMLFNNFSAGILGFIMTIAGFKILAPLMKFIMHILSVAVEALVHAHLLPLVSILVEPAKIVFLNNAINHGVFTPLGADQAAKAGQSILYTIESNPGPGLGILLAYMIFGKGTAKATSYGAGIIHFLGGIHEIYFPYVLMRPLLFIAVILGGMTGVATYQATGFGFKSPASPGSFIVYCLNAPRGEFLHMLLGVFLAALVSFVVAALIMKFTREPKQDLEAATAQMENTKGKKSSVASKLVSSDKNVNTEENASGNVSETSSSDDDPEALLDNYNTEDVDAHNYNNINHVIFACDAGMGSSAMGASMLRNKFKKAGINDITVTNTAINQLPKDAQLVITQKKLTDRAIKQTPNAIHISVDNFLNSPRYEELLNNLKKDDQA</sequence>
<name>PTMCB_STAAN</name>